<accession>O70400</accession>
<accession>Q99K93</accession>
<protein>
    <recommendedName>
        <fullName>PDZ and LIM domain protein 1</fullName>
    </recommendedName>
    <alternativeName>
        <fullName>C-terminal LIM domain protein 1</fullName>
    </alternativeName>
    <alternativeName>
        <fullName>Elfin</fullName>
    </alternativeName>
    <alternativeName>
        <fullName>LIM domain protein CLP-36</fullName>
    </alternativeName>
</protein>
<feature type="initiator methionine" description="Removed" evidence="2">
    <location>
        <position position="1"/>
    </location>
</feature>
<feature type="chain" id="PRO_0000075860" description="PDZ and LIM domain protein 1">
    <location>
        <begin position="2"/>
        <end position="327"/>
    </location>
</feature>
<feature type="domain" description="PDZ" evidence="5">
    <location>
        <begin position="3"/>
        <end position="85"/>
    </location>
</feature>
<feature type="domain" description="LIM zinc-binding" evidence="4">
    <location>
        <begin position="256"/>
        <end position="315"/>
    </location>
</feature>
<feature type="region of interest" description="Disordered" evidence="6">
    <location>
        <begin position="161"/>
        <end position="184"/>
    </location>
</feature>
<feature type="binding site" evidence="1">
    <location>
        <position position="258"/>
    </location>
    <ligand>
        <name>Zn(2+)</name>
        <dbReference type="ChEBI" id="CHEBI:29105"/>
        <label>1</label>
    </ligand>
</feature>
<feature type="binding site" evidence="1">
    <location>
        <position position="261"/>
    </location>
    <ligand>
        <name>Zn(2+)</name>
        <dbReference type="ChEBI" id="CHEBI:29105"/>
        <label>1</label>
    </ligand>
</feature>
<feature type="binding site" evidence="1">
    <location>
        <position position="278"/>
    </location>
    <ligand>
        <name>Zn(2+)</name>
        <dbReference type="ChEBI" id="CHEBI:29105"/>
        <label>1</label>
    </ligand>
</feature>
<feature type="binding site" evidence="1">
    <location>
        <position position="281"/>
    </location>
    <ligand>
        <name>Zn(2+)</name>
        <dbReference type="ChEBI" id="CHEBI:29105"/>
        <label>1</label>
    </ligand>
</feature>
<feature type="binding site" evidence="1">
    <location>
        <position position="284"/>
    </location>
    <ligand>
        <name>Zn(2+)</name>
        <dbReference type="ChEBI" id="CHEBI:29105"/>
        <label>2</label>
    </ligand>
</feature>
<feature type="binding site" evidence="1">
    <location>
        <position position="287"/>
    </location>
    <ligand>
        <name>Zn(2+)</name>
        <dbReference type="ChEBI" id="CHEBI:29105"/>
        <label>2</label>
    </ligand>
</feature>
<feature type="binding site" evidence="1">
    <location>
        <position position="305"/>
    </location>
    <ligand>
        <name>Zn(2+)</name>
        <dbReference type="ChEBI" id="CHEBI:29105"/>
        <label>2</label>
    </ligand>
</feature>
<feature type="binding site" evidence="1">
    <location>
        <position position="308"/>
    </location>
    <ligand>
        <name>Zn(2+)</name>
        <dbReference type="ChEBI" id="CHEBI:29105"/>
        <label>2</label>
    </ligand>
</feature>
<feature type="modified residue" description="N-acetylthreonine" evidence="2">
    <location>
        <position position="2"/>
    </location>
</feature>
<feature type="modified residue" description="Phosphoserine" evidence="9">
    <location>
        <position position="90"/>
    </location>
</feature>
<feature type="modified residue" description="Phosphoserine" evidence="9">
    <location>
        <position position="130"/>
    </location>
</feature>
<feature type="modified residue" description="Phosphotyrosine" evidence="2">
    <location>
        <position position="142"/>
    </location>
</feature>
<feature type="modified residue" description="Phosphothreonine" evidence="2">
    <location>
        <position position="314"/>
    </location>
</feature>
<feature type="modified residue" description="Phosphotyrosine" evidence="2">
    <location>
        <position position="319"/>
    </location>
</feature>
<feature type="sequence conflict" description="In Ref. 1; AAC08436." evidence="8" ref="1">
    <location>
        <position position="21"/>
    </location>
</feature>
<organism>
    <name type="scientific">Mus musculus</name>
    <name type="common">Mouse</name>
    <dbReference type="NCBI Taxonomy" id="10090"/>
    <lineage>
        <taxon>Eukaryota</taxon>
        <taxon>Metazoa</taxon>
        <taxon>Chordata</taxon>
        <taxon>Craniata</taxon>
        <taxon>Vertebrata</taxon>
        <taxon>Euteleostomi</taxon>
        <taxon>Mammalia</taxon>
        <taxon>Eutheria</taxon>
        <taxon>Euarchontoglires</taxon>
        <taxon>Glires</taxon>
        <taxon>Rodentia</taxon>
        <taxon>Myomorpha</taxon>
        <taxon>Muroidea</taxon>
        <taxon>Muridae</taxon>
        <taxon>Murinae</taxon>
        <taxon>Mus</taxon>
        <taxon>Mus</taxon>
    </lineage>
</organism>
<reference key="1">
    <citation type="journal article" date="2001" name="J. Cell. Biochem.">
        <title>Elfin is expressed during early heart development.</title>
        <authorList>
            <person name="Kotaka M."/>
            <person name="Lau Y.-M."/>
            <person name="Cheung K.-K."/>
            <person name="Lee S.M.Y."/>
            <person name="Li H.-Y."/>
            <person name="Chan W.-Y."/>
            <person name="Fung K.-P."/>
            <person name="Lee C.-Y."/>
            <person name="Waye M.M.Y."/>
            <person name="Tsui S.K.W."/>
        </authorList>
    </citation>
    <scope>NUCLEOTIDE SEQUENCE [MRNA]</scope>
    <scope>SUBCELLULAR LOCATION</scope>
    <scope>TISSUE SPECIFICITY</scope>
    <scope>DEVELOPMENTAL STAGE</scope>
</reference>
<reference key="2">
    <citation type="journal article" date="2005" name="Science">
        <title>The transcriptional landscape of the mammalian genome.</title>
        <authorList>
            <person name="Carninci P."/>
            <person name="Kasukawa T."/>
            <person name="Katayama S."/>
            <person name="Gough J."/>
            <person name="Frith M.C."/>
            <person name="Maeda N."/>
            <person name="Oyama R."/>
            <person name="Ravasi T."/>
            <person name="Lenhard B."/>
            <person name="Wells C."/>
            <person name="Kodzius R."/>
            <person name="Shimokawa K."/>
            <person name="Bajic V.B."/>
            <person name="Brenner S.E."/>
            <person name="Batalov S."/>
            <person name="Forrest A.R."/>
            <person name="Zavolan M."/>
            <person name="Davis M.J."/>
            <person name="Wilming L.G."/>
            <person name="Aidinis V."/>
            <person name="Allen J.E."/>
            <person name="Ambesi-Impiombato A."/>
            <person name="Apweiler R."/>
            <person name="Aturaliya R.N."/>
            <person name="Bailey T.L."/>
            <person name="Bansal M."/>
            <person name="Baxter L."/>
            <person name="Beisel K.W."/>
            <person name="Bersano T."/>
            <person name="Bono H."/>
            <person name="Chalk A.M."/>
            <person name="Chiu K.P."/>
            <person name="Choudhary V."/>
            <person name="Christoffels A."/>
            <person name="Clutterbuck D.R."/>
            <person name="Crowe M.L."/>
            <person name="Dalla E."/>
            <person name="Dalrymple B.P."/>
            <person name="de Bono B."/>
            <person name="Della Gatta G."/>
            <person name="di Bernardo D."/>
            <person name="Down T."/>
            <person name="Engstrom P."/>
            <person name="Fagiolini M."/>
            <person name="Faulkner G."/>
            <person name="Fletcher C.F."/>
            <person name="Fukushima T."/>
            <person name="Furuno M."/>
            <person name="Futaki S."/>
            <person name="Gariboldi M."/>
            <person name="Georgii-Hemming P."/>
            <person name="Gingeras T.R."/>
            <person name="Gojobori T."/>
            <person name="Green R.E."/>
            <person name="Gustincich S."/>
            <person name="Harbers M."/>
            <person name="Hayashi Y."/>
            <person name="Hensch T.K."/>
            <person name="Hirokawa N."/>
            <person name="Hill D."/>
            <person name="Huminiecki L."/>
            <person name="Iacono M."/>
            <person name="Ikeo K."/>
            <person name="Iwama A."/>
            <person name="Ishikawa T."/>
            <person name="Jakt M."/>
            <person name="Kanapin A."/>
            <person name="Katoh M."/>
            <person name="Kawasawa Y."/>
            <person name="Kelso J."/>
            <person name="Kitamura H."/>
            <person name="Kitano H."/>
            <person name="Kollias G."/>
            <person name="Krishnan S.P."/>
            <person name="Kruger A."/>
            <person name="Kummerfeld S.K."/>
            <person name="Kurochkin I.V."/>
            <person name="Lareau L.F."/>
            <person name="Lazarevic D."/>
            <person name="Lipovich L."/>
            <person name="Liu J."/>
            <person name="Liuni S."/>
            <person name="McWilliam S."/>
            <person name="Madan Babu M."/>
            <person name="Madera M."/>
            <person name="Marchionni L."/>
            <person name="Matsuda H."/>
            <person name="Matsuzawa S."/>
            <person name="Miki H."/>
            <person name="Mignone F."/>
            <person name="Miyake S."/>
            <person name="Morris K."/>
            <person name="Mottagui-Tabar S."/>
            <person name="Mulder N."/>
            <person name="Nakano N."/>
            <person name="Nakauchi H."/>
            <person name="Ng P."/>
            <person name="Nilsson R."/>
            <person name="Nishiguchi S."/>
            <person name="Nishikawa S."/>
            <person name="Nori F."/>
            <person name="Ohara O."/>
            <person name="Okazaki Y."/>
            <person name="Orlando V."/>
            <person name="Pang K.C."/>
            <person name="Pavan W.J."/>
            <person name="Pavesi G."/>
            <person name="Pesole G."/>
            <person name="Petrovsky N."/>
            <person name="Piazza S."/>
            <person name="Reed J."/>
            <person name="Reid J.F."/>
            <person name="Ring B.Z."/>
            <person name="Ringwald M."/>
            <person name="Rost B."/>
            <person name="Ruan Y."/>
            <person name="Salzberg S.L."/>
            <person name="Sandelin A."/>
            <person name="Schneider C."/>
            <person name="Schoenbach C."/>
            <person name="Sekiguchi K."/>
            <person name="Semple C.A."/>
            <person name="Seno S."/>
            <person name="Sessa L."/>
            <person name="Sheng Y."/>
            <person name="Shibata Y."/>
            <person name="Shimada H."/>
            <person name="Shimada K."/>
            <person name="Silva D."/>
            <person name="Sinclair B."/>
            <person name="Sperling S."/>
            <person name="Stupka E."/>
            <person name="Sugiura K."/>
            <person name="Sultana R."/>
            <person name="Takenaka Y."/>
            <person name="Taki K."/>
            <person name="Tammoja K."/>
            <person name="Tan S.L."/>
            <person name="Tang S."/>
            <person name="Taylor M.S."/>
            <person name="Tegner J."/>
            <person name="Teichmann S.A."/>
            <person name="Ueda H.R."/>
            <person name="van Nimwegen E."/>
            <person name="Verardo R."/>
            <person name="Wei C.L."/>
            <person name="Yagi K."/>
            <person name="Yamanishi H."/>
            <person name="Zabarovsky E."/>
            <person name="Zhu S."/>
            <person name="Zimmer A."/>
            <person name="Hide W."/>
            <person name="Bult C."/>
            <person name="Grimmond S.M."/>
            <person name="Teasdale R.D."/>
            <person name="Liu E.T."/>
            <person name="Brusic V."/>
            <person name="Quackenbush J."/>
            <person name="Wahlestedt C."/>
            <person name="Mattick J.S."/>
            <person name="Hume D.A."/>
            <person name="Kai C."/>
            <person name="Sasaki D."/>
            <person name="Tomaru Y."/>
            <person name="Fukuda S."/>
            <person name="Kanamori-Katayama M."/>
            <person name="Suzuki M."/>
            <person name="Aoki J."/>
            <person name="Arakawa T."/>
            <person name="Iida J."/>
            <person name="Imamura K."/>
            <person name="Itoh M."/>
            <person name="Kato T."/>
            <person name="Kawaji H."/>
            <person name="Kawagashira N."/>
            <person name="Kawashima T."/>
            <person name="Kojima M."/>
            <person name="Kondo S."/>
            <person name="Konno H."/>
            <person name="Nakano K."/>
            <person name="Ninomiya N."/>
            <person name="Nishio T."/>
            <person name="Okada M."/>
            <person name="Plessy C."/>
            <person name="Shibata K."/>
            <person name="Shiraki T."/>
            <person name="Suzuki S."/>
            <person name="Tagami M."/>
            <person name="Waki K."/>
            <person name="Watahiki A."/>
            <person name="Okamura-Oho Y."/>
            <person name="Suzuki H."/>
            <person name="Kawai J."/>
            <person name="Hayashizaki Y."/>
        </authorList>
    </citation>
    <scope>NUCLEOTIDE SEQUENCE [LARGE SCALE MRNA]</scope>
    <source>
        <strain>BALB/cJ</strain>
        <strain>C57BL/6J</strain>
        <strain>NOD</strain>
        <tissue>Skin</tissue>
        <tissue>Thymus</tissue>
    </source>
</reference>
<reference key="3">
    <citation type="journal article" date="2004" name="Genome Res.">
        <title>The status, quality, and expansion of the NIH full-length cDNA project: the Mammalian Gene Collection (MGC).</title>
        <authorList>
            <consortium name="The MGC Project Team"/>
        </authorList>
    </citation>
    <scope>NUCLEOTIDE SEQUENCE [LARGE SCALE MRNA]</scope>
    <source>
        <strain>Czech II</strain>
        <tissue>Mammary tumor</tissue>
    </source>
</reference>
<reference key="4">
    <citation type="journal article" date="2010" name="Cell">
        <title>A tissue-specific atlas of mouse protein phosphorylation and expression.</title>
        <authorList>
            <person name="Huttlin E.L."/>
            <person name="Jedrychowski M.P."/>
            <person name="Elias J.E."/>
            <person name="Goswami T."/>
            <person name="Rad R."/>
            <person name="Beausoleil S.A."/>
            <person name="Villen J."/>
            <person name="Haas W."/>
            <person name="Sowa M.E."/>
            <person name="Gygi S.P."/>
        </authorList>
    </citation>
    <scope>PHOSPHORYLATION [LARGE SCALE ANALYSIS] AT SER-90 AND SER-130</scope>
    <scope>IDENTIFICATION BY MASS SPECTROMETRY [LARGE SCALE ANALYSIS]</scope>
    <source>
        <tissue>Brown adipose tissue</tissue>
        <tissue>Heart</tissue>
        <tissue>Kidney</tissue>
        <tissue>Liver</tissue>
        <tissue>Lung</tissue>
        <tissue>Pancreas</tissue>
        <tissue>Spleen</tissue>
        <tissue>Testis</tissue>
    </source>
</reference>
<name>PDLI1_MOUSE</name>
<proteinExistence type="evidence at protein level"/>
<evidence type="ECO:0000250" key="1"/>
<evidence type="ECO:0000250" key="2">
    <source>
        <dbReference type="UniProtKB" id="O00151"/>
    </source>
</evidence>
<evidence type="ECO:0000250" key="3">
    <source>
        <dbReference type="UniProtKB" id="P52944"/>
    </source>
</evidence>
<evidence type="ECO:0000255" key="4">
    <source>
        <dbReference type="PROSITE-ProRule" id="PRU00125"/>
    </source>
</evidence>
<evidence type="ECO:0000255" key="5">
    <source>
        <dbReference type="PROSITE-ProRule" id="PRU00143"/>
    </source>
</evidence>
<evidence type="ECO:0000256" key="6">
    <source>
        <dbReference type="SAM" id="MobiDB-lite"/>
    </source>
</evidence>
<evidence type="ECO:0000269" key="7">
    <source>
    </source>
</evidence>
<evidence type="ECO:0000305" key="8"/>
<evidence type="ECO:0007744" key="9">
    <source>
    </source>
</evidence>
<sequence>MTTQQIVLQGPGPWGFRLVGGKDFEQPLAISRVTPGSKAAIANLCIGDLITAIDGEDTSSMTHLEAQNKIKGCADNMTLTVSRSEQKIWSPLVTEEGKRHPYKMNLASEPQEVLHIGSAHNRSAMPFTASPAPSTRVITNQYNSPTGLYSSENISNFNNAVESKTSASGEEANSRPVVQPHPSGSLIIDKDSEVYKMLQEKQELNEPPKQSTSFLVLQEILESDGKGDPNKPSGFRSVKAPVTKVAASVGNAQKLPICDKCGTGIVGVFVKLRDHHRHPECYVCTDCGINLKQKGHFFVEDQIYCEKHARERVTPPEGYDVVTVFRE</sequence>
<comment type="function">
    <text evidence="2 3">Cytoskeletal protein that may act as an adapter that brings other proteins (like kinases) to the cytoskeleton (By similarity). Involved in assembly, disassembly and directioning of stress fibers in fibroblasts. Required for the localization of ACTN1 and PALLD to stress fibers. Required for cell migration and in maintaining cell polarity of fibroblasts (By similarity).</text>
</comment>
<comment type="subunit">
    <text evidence="2 3">Interacts with ACTN1, ACTN2 and ACTN4 (By similarity). Interacts with PDLIM4 (By similarity).</text>
</comment>
<comment type="subcellular location">
    <subcellularLocation>
        <location evidence="7">Cytoplasm</location>
        <location evidence="7">Cytoskeleton</location>
    </subcellularLocation>
    <subcellularLocation>
        <location evidence="2">Cytoplasm</location>
        <location evidence="2">Myofibril</location>
        <location evidence="2">Sarcomere</location>
        <location evidence="2">Z line</location>
    </subcellularLocation>
    <text>Associates with the actin stress fibers (PubMed:11596114).</text>
</comment>
<comment type="tissue specificity">
    <text evidence="7">Expressed in heart, lung, spleen, testis and skeletal muscle.</text>
</comment>
<comment type="developmental stage">
    <text evidence="7">Detected throughout the developing heart.</text>
</comment>
<keyword id="KW-0007">Acetylation</keyword>
<keyword id="KW-0963">Cytoplasm</keyword>
<keyword id="KW-0206">Cytoskeleton</keyword>
<keyword id="KW-0440">LIM domain</keyword>
<keyword id="KW-0479">Metal-binding</keyword>
<keyword id="KW-0597">Phosphoprotein</keyword>
<keyword id="KW-1185">Reference proteome</keyword>
<keyword id="KW-0862">Zinc</keyword>
<gene>
    <name type="primary">Pdlim1</name>
    <name type="synonym">Clim1</name>
</gene>
<dbReference type="EMBL" id="AF053367">
    <property type="protein sequence ID" value="AAC08436.1"/>
    <property type="molecule type" value="mRNA"/>
</dbReference>
<dbReference type="EMBL" id="AK076285">
    <property type="protein sequence ID" value="BAC36288.1"/>
    <property type="molecule type" value="mRNA"/>
</dbReference>
<dbReference type="EMBL" id="AK088089">
    <property type="protein sequence ID" value="BAC40138.1"/>
    <property type="molecule type" value="mRNA"/>
</dbReference>
<dbReference type="EMBL" id="AK146225">
    <property type="protein sequence ID" value="BAE26993.1"/>
    <property type="molecule type" value="mRNA"/>
</dbReference>
<dbReference type="EMBL" id="BC004809">
    <property type="protein sequence ID" value="AAH04809.1"/>
    <property type="molecule type" value="mRNA"/>
</dbReference>
<dbReference type="CCDS" id="CCDS37977.1"/>
<dbReference type="RefSeq" id="NP_058557.2">
    <property type="nucleotide sequence ID" value="NM_016861.4"/>
</dbReference>
<dbReference type="SMR" id="O70400"/>
<dbReference type="BioGRID" id="207571">
    <property type="interactions" value="6"/>
</dbReference>
<dbReference type="CORUM" id="O70400"/>
<dbReference type="FunCoup" id="O70400">
    <property type="interactions" value="215"/>
</dbReference>
<dbReference type="STRING" id="10090.ENSMUSP00000064545"/>
<dbReference type="GlyGen" id="O70400">
    <property type="glycosylation" value="7 sites, 1 N-linked glycan (1 site), 1 O-linked glycan (5 sites)"/>
</dbReference>
<dbReference type="iPTMnet" id="O70400"/>
<dbReference type="PhosphoSitePlus" id="O70400"/>
<dbReference type="SwissPalm" id="O70400"/>
<dbReference type="CPTAC" id="non-CPTAC-3992"/>
<dbReference type="jPOST" id="O70400"/>
<dbReference type="PaxDb" id="10090-ENSMUSP00000064545"/>
<dbReference type="PeptideAtlas" id="O70400"/>
<dbReference type="ProteomicsDB" id="288023"/>
<dbReference type="Pumba" id="O70400"/>
<dbReference type="Antibodypedia" id="1897">
    <property type="antibodies" value="410 antibodies from 39 providers"/>
</dbReference>
<dbReference type="DNASU" id="54132"/>
<dbReference type="Ensembl" id="ENSMUST00000068439.13">
    <property type="protein sequence ID" value="ENSMUSP00000064545.6"/>
    <property type="gene ID" value="ENSMUSG00000055044.13"/>
</dbReference>
<dbReference type="GeneID" id="54132"/>
<dbReference type="KEGG" id="mmu:54132"/>
<dbReference type="UCSC" id="uc008hkk.2">
    <property type="organism name" value="mouse"/>
</dbReference>
<dbReference type="AGR" id="MGI:1860611"/>
<dbReference type="CTD" id="9124"/>
<dbReference type="MGI" id="MGI:1860611">
    <property type="gene designation" value="Pdlim1"/>
</dbReference>
<dbReference type="VEuPathDB" id="HostDB:ENSMUSG00000055044"/>
<dbReference type="eggNOG" id="KOG1703">
    <property type="taxonomic scope" value="Eukaryota"/>
</dbReference>
<dbReference type="GeneTree" id="ENSGT00940000155525"/>
<dbReference type="HOGENOM" id="CLU_038114_1_1_1"/>
<dbReference type="InParanoid" id="O70400"/>
<dbReference type="OMA" id="QIYCETH"/>
<dbReference type="OrthoDB" id="1293114at2759"/>
<dbReference type="PhylomeDB" id="O70400"/>
<dbReference type="TreeFam" id="TF106408"/>
<dbReference type="BioGRID-ORCS" id="54132">
    <property type="hits" value="3 hits in 77 CRISPR screens"/>
</dbReference>
<dbReference type="ChiTaRS" id="Pdlim1">
    <property type="organism name" value="mouse"/>
</dbReference>
<dbReference type="PRO" id="PR:O70400"/>
<dbReference type="Proteomes" id="UP000000589">
    <property type="component" value="Chromosome 19"/>
</dbReference>
<dbReference type="RNAct" id="O70400">
    <property type="molecule type" value="protein"/>
</dbReference>
<dbReference type="Bgee" id="ENSMUSG00000055044">
    <property type="expression patterns" value="Expressed in ileum and 108 other cell types or tissues"/>
</dbReference>
<dbReference type="ExpressionAtlas" id="O70400">
    <property type="expression patterns" value="baseline and differential"/>
</dbReference>
<dbReference type="GO" id="GO:0001725">
    <property type="term" value="C:stress fiber"/>
    <property type="evidence" value="ECO:0007669"/>
    <property type="project" value="Ensembl"/>
</dbReference>
<dbReference type="GO" id="GO:0005667">
    <property type="term" value="C:transcription regulator complex"/>
    <property type="evidence" value="ECO:0000314"/>
    <property type="project" value="MGI"/>
</dbReference>
<dbReference type="GO" id="GO:0030018">
    <property type="term" value="C:Z disc"/>
    <property type="evidence" value="ECO:0007669"/>
    <property type="project" value="UniProtKB-SubCell"/>
</dbReference>
<dbReference type="GO" id="GO:0003779">
    <property type="term" value="F:actin binding"/>
    <property type="evidence" value="ECO:0007669"/>
    <property type="project" value="Ensembl"/>
</dbReference>
<dbReference type="GO" id="GO:0046872">
    <property type="term" value="F:metal ion binding"/>
    <property type="evidence" value="ECO:0007669"/>
    <property type="project" value="UniProtKB-KW"/>
</dbReference>
<dbReference type="GO" id="GO:0003713">
    <property type="term" value="F:transcription coactivator activity"/>
    <property type="evidence" value="ECO:0000314"/>
    <property type="project" value="MGI"/>
</dbReference>
<dbReference type="GO" id="GO:0030950">
    <property type="term" value="P:establishment or maintenance of actin cytoskeleton polarity"/>
    <property type="evidence" value="ECO:0007669"/>
    <property type="project" value="Ensembl"/>
</dbReference>
<dbReference type="GO" id="GO:0010761">
    <property type="term" value="P:fibroblast migration"/>
    <property type="evidence" value="ECO:0007669"/>
    <property type="project" value="Ensembl"/>
</dbReference>
<dbReference type="GO" id="GO:0030011">
    <property type="term" value="P:maintenance of cell polarity"/>
    <property type="evidence" value="ECO:0007669"/>
    <property type="project" value="Ensembl"/>
</dbReference>
<dbReference type="GO" id="GO:0006357">
    <property type="term" value="P:regulation of transcription by RNA polymerase II"/>
    <property type="evidence" value="ECO:0000314"/>
    <property type="project" value="MGI"/>
</dbReference>
<dbReference type="GO" id="GO:0001666">
    <property type="term" value="P:response to hypoxia"/>
    <property type="evidence" value="ECO:0007669"/>
    <property type="project" value="Ensembl"/>
</dbReference>
<dbReference type="GO" id="GO:0043149">
    <property type="term" value="P:stress fiber assembly"/>
    <property type="evidence" value="ECO:0007669"/>
    <property type="project" value="Ensembl"/>
</dbReference>
<dbReference type="CDD" id="cd09448">
    <property type="entry name" value="LIM_CLP36"/>
    <property type="match status" value="1"/>
</dbReference>
<dbReference type="CDD" id="cd06753">
    <property type="entry name" value="PDZ_PDLIM-like"/>
    <property type="match status" value="1"/>
</dbReference>
<dbReference type="FunFam" id="2.10.110.10:FF:000026">
    <property type="entry name" value="PDZ and LIM domain protein 3"/>
    <property type="match status" value="1"/>
</dbReference>
<dbReference type="FunFam" id="2.30.42.10:FF:000055">
    <property type="entry name" value="PDZ and LIM domain protein 3"/>
    <property type="match status" value="1"/>
</dbReference>
<dbReference type="Gene3D" id="2.30.42.10">
    <property type="match status" value="1"/>
</dbReference>
<dbReference type="Gene3D" id="2.10.110.10">
    <property type="entry name" value="Cysteine Rich Protein"/>
    <property type="match status" value="1"/>
</dbReference>
<dbReference type="InterPro" id="IPR031847">
    <property type="entry name" value="PDLI1-4/Zasp-like_mid"/>
</dbReference>
<dbReference type="InterPro" id="IPR028537">
    <property type="entry name" value="PDLIM1_LIM"/>
</dbReference>
<dbReference type="InterPro" id="IPR001478">
    <property type="entry name" value="PDZ"/>
</dbReference>
<dbReference type="InterPro" id="IPR050604">
    <property type="entry name" value="PDZ-LIM_domain"/>
</dbReference>
<dbReference type="InterPro" id="IPR036034">
    <property type="entry name" value="PDZ_sf"/>
</dbReference>
<dbReference type="InterPro" id="IPR006643">
    <property type="entry name" value="Zasp-like_motif"/>
</dbReference>
<dbReference type="InterPro" id="IPR001781">
    <property type="entry name" value="Znf_LIM"/>
</dbReference>
<dbReference type="PANTHER" id="PTHR24214:SF5">
    <property type="entry name" value="PDZ AND LIM DOMAIN PROTEIN 1"/>
    <property type="match status" value="1"/>
</dbReference>
<dbReference type="PANTHER" id="PTHR24214">
    <property type="entry name" value="PDZ AND LIM DOMAIN PROTEIN ZASP"/>
    <property type="match status" value="1"/>
</dbReference>
<dbReference type="Pfam" id="PF15936">
    <property type="entry name" value="DUF4749"/>
    <property type="match status" value="1"/>
</dbReference>
<dbReference type="Pfam" id="PF00412">
    <property type="entry name" value="LIM"/>
    <property type="match status" value="1"/>
</dbReference>
<dbReference type="Pfam" id="PF00595">
    <property type="entry name" value="PDZ"/>
    <property type="match status" value="1"/>
</dbReference>
<dbReference type="SMART" id="SM00132">
    <property type="entry name" value="LIM"/>
    <property type="match status" value="1"/>
</dbReference>
<dbReference type="SMART" id="SM00228">
    <property type="entry name" value="PDZ"/>
    <property type="match status" value="1"/>
</dbReference>
<dbReference type="SMART" id="SM00735">
    <property type="entry name" value="ZM"/>
    <property type="match status" value="1"/>
</dbReference>
<dbReference type="SUPFAM" id="SSF57716">
    <property type="entry name" value="Glucocorticoid receptor-like (DNA-binding domain)"/>
    <property type="match status" value="2"/>
</dbReference>
<dbReference type="SUPFAM" id="SSF50156">
    <property type="entry name" value="PDZ domain-like"/>
    <property type="match status" value="1"/>
</dbReference>
<dbReference type="PROSITE" id="PS00478">
    <property type="entry name" value="LIM_DOMAIN_1"/>
    <property type="match status" value="1"/>
</dbReference>
<dbReference type="PROSITE" id="PS50023">
    <property type="entry name" value="LIM_DOMAIN_2"/>
    <property type="match status" value="1"/>
</dbReference>
<dbReference type="PROSITE" id="PS50106">
    <property type="entry name" value="PDZ"/>
    <property type="match status" value="1"/>
</dbReference>